<dbReference type="EC" id="5.2.1.8" evidence="1"/>
<dbReference type="EMBL" id="CP001089">
    <property type="protein sequence ID" value="ACD95645.1"/>
    <property type="molecule type" value="Genomic_DNA"/>
</dbReference>
<dbReference type="RefSeq" id="WP_012469984.1">
    <property type="nucleotide sequence ID" value="NC_010814.1"/>
</dbReference>
<dbReference type="SMR" id="B3E1Z5"/>
<dbReference type="STRING" id="398767.Glov_1929"/>
<dbReference type="KEGG" id="glo:Glov_1929"/>
<dbReference type="eggNOG" id="COG0544">
    <property type="taxonomic scope" value="Bacteria"/>
</dbReference>
<dbReference type="HOGENOM" id="CLU_033058_3_2_7"/>
<dbReference type="OrthoDB" id="9767721at2"/>
<dbReference type="Proteomes" id="UP000002420">
    <property type="component" value="Chromosome"/>
</dbReference>
<dbReference type="GO" id="GO:0005737">
    <property type="term" value="C:cytoplasm"/>
    <property type="evidence" value="ECO:0007669"/>
    <property type="project" value="UniProtKB-SubCell"/>
</dbReference>
<dbReference type="GO" id="GO:0003755">
    <property type="term" value="F:peptidyl-prolyl cis-trans isomerase activity"/>
    <property type="evidence" value="ECO:0007669"/>
    <property type="project" value="UniProtKB-UniRule"/>
</dbReference>
<dbReference type="GO" id="GO:0044183">
    <property type="term" value="F:protein folding chaperone"/>
    <property type="evidence" value="ECO:0007669"/>
    <property type="project" value="TreeGrafter"/>
</dbReference>
<dbReference type="GO" id="GO:0043022">
    <property type="term" value="F:ribosome binding"/>
    <property type="evidence" value="ECO:0007669"/>
    <property type="project" value="TreeGrafter"/>
</dbReference>
<dbReference type="GO" id="GO:0051083">
    <property type="term" value="P:'de novo' cotranslational protein folding"/>
    <property type="evidence" value="ECO:0007669"/>
    <property type="project" value="TreeGrafter"/>
</dbReference>
<dbReference type="GO" id="GO:0051301">
    <property type="term" value="P:cell division"/>
    <property type="evidence" value="ECO:0007669"/>
    <property type="project" value="UniProtKB-KW"/>
</dbReference>
<dbReference type="GO" id="GO:0061077">
    <property type="term" value="P:chaperone-mediated protein folding"/>
    <property type="evidence" value="ECO:0007669"/>
    <property type="project" value="TreeGrafter"/>
</dbReference>
<dbReference type="GO" id="GO:0015031">
    <property type="term" value="P:protein transport"/>
    <property type="evidence" value="ECO:0007669"/>
    <property type="project" value="UniProtKB-UniRule"/>
</dbReference>
<dbReference type="GO" id="GO:0043335">
    <property type="term" value="P:protein unfolding"/>
    <property type="evidence" value="ECO:0007669"/>
    <property type="project" value="TreeGrafter"/>
</dbReference>
<dbReference type="Gene3D" id="3.10.50.40">
    <property type="match status" value="1"/>
</dbReference>
<dbReference type="Gene3D" id="3.30.70.1050">
    <property type="entry name" value="Trigger factor ribosome-binding domain"/>
    <property type="match status" value="1"/>
</dbReference>
<dbReference type="Gene3D" id="1.10.3120.10">
    <property type="entry name" value="Trigger factor, C-terminal domain"/>
    <property type="match status" value="1"/>
</dbReference>
<dbReference type="HAMAP" id="MF_00303">
    <property type="entry name" value="Trigger_factor_Tig"/>
    <property type="match status" value="1"/>
</dbReference>
<dbReference type="InterPro" id="IPR046357">
    <property type="entry name" value="PPIase_dom_sf"/>
</dbReference>
<dbReference type="InterPro" id="IPR001179">
    <property type="entry name" value="PPIase_FKBP_dom"/>
</dbReference>
<dbReference type="InterPro" id="IPR005215">
    <property type="entry name" value="Trig_fac"/>
</dbReference>
<dbReference type="InterPro" id="IPR008880">
    <property type="entry name" value="Trigger_fac_C"/>
</dbReference>
<dbReference type="InterPro" id="IPR037041">
    <property type="entry name" value="Trigger_fac_C_sf"/>
</dbReference>
<dbReference type="InterPro" id="IPR008881">
    <property type="entry name" value="Trigger_fac_ribosome-bd_bac"/>
</dbReference>
<dbReference type="InterPro" id="IPR036611">
    <property type="entry name" value="Trigger_fac_ribosome-bd_sf"/>
</dbReference>
<dbReference type="InterPro" id="IPR027304">
    <property type="entry name" value="Trigger_fact/SurA_dom_sf"/>
</dbReference>
<dbReference type="NCBIfam" id="TIGR00115">
    <property type="entry name" value="tig"/>
    <property type="match status" value="1"/>
</dbReference>
<dbReference type="PANTHER" id="PTHR30560">
    <property type="entry name" value="TRIGGER FACTOR CHAPERONE AND PEPTIDYL-PROLYL CIS/TRANS ISOMERASE"/>
    <property type="match status" value="1"/>
</dbReference>
<dbReference type="PANTHER" id="PTHR30560:SF3">
    <property type="entry name" value="TRIGGER FACTOR-LIKE PROTEIN TIG, CHLOROPLASTIC"/>
    <property type="match status" value="1"/>
</dbReference>
<dbReference type="Pfam" id="PF00254">
    <property type="entry name" value="FKBP_C"/>
    <property type="match status" value="1"/>
</dbReference>
<dbReference type="Pfam" id="PF05698">
    <property type="entry name" value="Trigger_C"/>
    <property type="match status" value="1"/>
</dbReference>
<dbReference type="Pfam" id="PF05697">
    <property type="entry name" value="Trigger_N"/>
    <property type="match status" value="1"/>
</dbReference>
<dbReference type="PIRSF" id="PIRSF003095">
    <property type="entry name" value="Trigger_factor"/>
    <property type="match status" value="1"/>
</dbReference>
<dbReference type="SUPFAM" id="SSF54534">
    <property type="entry name" value="FKBP-like"/>
    <property type="match status" value="1"/>
</dbReference>
<dbReference type="SUPFAM" id="SSF109998">
    <property type="entry name" value="Triger factor/SurA peptide-binding domain-like"/>
    <property type="match status" value="1"/>
</dbReference>
<dbReference type="SUPFAM" id="SSF102735">
    <property type="entry name" value="Trigger factor ribosome-binding domain"/>
    <property type="match status" value="1"/>
</dbReference>
<dbReference type="PROSITE" id="PS50059">
    <property type="entry name" value="FKBP_PPIASE"/>
    <property type="match status" value="1"/>
</dbReference>
<keyword id="KW-0131">Cell cycle</keyword>
<keyword id="KW-0132">Cell division</keyword>
<keyword id="KW-0143">Chaperone</keyword>
<keyword id="KW-0963">Cytoplasm</keyword>
<keyword id="KW-0413">Isomerase</keyword>
<keyword id="KW-1185">Reference proteome</keyword>
<keyword id="KW-0697">Rotamase</keyword>
<accession>B3E1Z5</accession>
<evidence type="ECO:0000255" key="1">
    <source>
        <dbReference type="HAMAP-Rule" id="MF_00303"/>
    </source>
</evidence>
<comment type="function">
    <text evidence="1">Involved in protein export. Acts as a chaperone by maintaining the newly synthesized protein in an open conformation. Functions as a peptidyl-prolyl cis-trans isomerase.</text>
</comment>
<comment type="catalytic activity">
    <reaction evidence="1">
        <text>[protein]-peptidylproline (omega=180) = [protein]-peptidylproline (omega=0)</text>
        <dbReference type="Rhea" id="RHEA:16237"/>
        <dbReference type="Rhea" id="RHEA-COMP:10747"/>
        <dbReference type="Rhea" id="RHEA-COMP:10748"/>
        <dbReference type="ChEBI" id="CHEBI:83833"/>
        <dbReference type="ChEBI" id="CHEBI:83834"/>
        <dbReference type="EC" id="5.2.1.8"/>
    </reaction>
</comment>
<comment type="subcellular location">
    <subcellularLocation>
        <location>Cytoplasm</location>
    </subcellularLocation>
    <text evidence="1">About half TF is bound to the ribosome near the polypeptide exit tunnel while the other half is free in the cytoplasm.</text>
</comment>
<comment type="domain">
    <text evidence="1">Consists of 3 domains; the N-terminus binds the ribosome, the middle domain has PPIase activity, while the C-terminus has intrinsic chaperone activity on its own.</text>
</comment>
<comment type="similarity">
    <text evidence="1">Belongs to the FKBP-type PPIase family. Tig subfamily.</text>
</comment>
<gene>
    <name evidence="1" type="primary">tig</name>
    <name type="ordered locus">Glov_1929</name>
</gene>
<name>TIG_TRIL1</name>
<sequence length="440" mass="49430">MQVKIEEISSVKRRISVEVPAERVNTEIEKSFAGIQKKATLAGFRKGKAPLQMVKKFYRNAMQDEVMRRLYEQTLFPALDEHKLEPVDAPMIDDIALVEEGTPFKYSALIEIMPQILLGEYKGLQVKKERYVADEKAVEGEIERMRENMAQLAPVEEGTVEKGMVLTVDFSFAVPGYPEEETSGKDASVEVGNGRLLPGLEEGLIGMALGETKDITVTMPDDNPNKELAGKPGVFTVTLKEIKKKELPELNDEFAQQFGDFETIADMRTKLTEMREQQELERIKTDLKTRIIDALIEKNPLEVPDSMVRRQTDFMLENLKNRLKGQNMSLEMMGLDEDGYRQRFWGEAAQKVKGGLLVMALVEQENIAVEEADLEARYAQIAAGNEDMLSRIKEFYAAQANARNSMVAEIKEDKAIAFLLENAVVTEVEAAELNAPVAGE</sequence>
<organism>
    <name type="scientific">Trichlorobacter lovleyi (strain ATCC BAA-1151 / DSM 17278 / SZ)</name>
    <name type="common">Geobacter lovleyi</name>
    <dbReference type="NCBI Taxonomy" id="398767"/>
    <lineage>
        <taxon>Bacteria</taxon>
        <taxon>Pseudomonadati</taxon>
        <taxon>Thermodesulfobacteriota</taxon>
        <taxon>Desulfuromonadia</taxon>
        <taxon>Geobacterales</taxon>
        <taxon>Geobacteraceae</taxon>
        <taxon>Trichlorobacter</taxon>
    </lineage>
</organism>
<protein>
    <recommendedName>
        <fullName evidence="1">Trigger factor</fullName>
        <shortName evidence="1">TF</shortName>
        <ecNumber evidence="1">5.2.1.8</ecNumber>
    </recommendedName>
    <alternativeName>
        <fullName evidence="1">PPIase</fullName>
    </alternativeName>
</protein>
<feature type="chain" id="PRO_1000115539" description="Trigger factor">
    <location>
        <begin position="1"/>
        <end position="440"/>
    </location>
</feature>
<feature type="domain" description="PPIase FKBP-type" evidence="1">
    <location>
        <begin position="163"/>
        <end position="248"/>
    </location>
</feature>
<proteinExistence type="inferred from homology"/>
<reference key="1">
    <citation type="submission" date="2008-05" db="EMBL/GenBank/DDBJ databases">
        <title>Complete sequence of chromosome of Geobacter lovleyi SZ.</title>
        <authorList>
            <consortium name="US DOE Joint Genome Institute"/>
            <person name="Lucas S."/>
            <person name="Copeland A."/>
            <person name="Lapidus A."/>
            <person name="Glavina del Rio T."/>
            <person name="Dalin E."/>
            <person name="Tice H."/>
            <person name="Bruce D."/>
            <person name="Goodwin L."/>
            <person name="Pitluck S."/>
            <person name="Chertkov O."/>
            <person name="Meincke L."/>
            <person name="Brettin T."/>
            <person name="Detter J.C."/>
            <person name="Han C."/>
            <person name="Tapia R."/>
            <person name="Kuske C.R."/>
            <person name="Schmutz J."/>
            <person name="Larimer F."/>
            <person name="Land M."/>
            <person name="Hauser L."/>
            <person name="Kyrpides N."/>
            <person name="Mikhailova N."/>
            <person name="Sung Y."/>
            <person name="Fletcher K.E."/>
            <person name="Ritalahti K.M."/>
            <person name="Loeffler F.E."/>
            <person name="Richardson P."/>
        </authorList>
    </citation>
    <scope>NUCLEOTIDE SEQUENCE [LARGE SCALE GENOMIC DNA]</scope>
    <source>
        <strain>ATCC BAA-1151 / DSM 17278 / SZ</strain>
    </source>
</reference>